<gene>
    <name evidence="1" type="primary">ndk</name>
    <name type="ordered locus">ECH_1117</name>
</gene>
<organism>
    <name type="scientific">Ehrlichia chaffeensis (strain ATCC CRL-10679 / Arkansas)</name>
    <dbReference type="NCBI Taxonomy" id="205920"/>
    <lineage>
        <taxon>Bacteria</taxon>
        <taxon>Pseudomonadati</taxon>
        <taxon>Pseudomonadota</taxon>
        <taxon>Alphaproteobacteria</taxon>
        <taxon>Rickettsiales</taxon>
        <taxon>Anaplasmataceae</taxon>
        <taxon>Ehrlichia</taxon>
    </lineage>
</organism>
<sequence>MLEKTLSILKPDVIKRNITGQVNSYIENSGLKIIIQKMCLLTRCQAEEFYAIHKSQHFFVPLIDFMVSGPIIVQVLQGENAISLYREIMGATDPKKASPGTIRADFAENIDANCVHGSDSLDNAMREIRFFFSDYELLALNG</sequence>
<dbReference type="EC" id="2.7.4.6" evidence="1"/>
<dbReference type="EMBL" id="CP000236">
    <property type="protein sequence ID" value="ABD45237.1"/>
    <property type="molecule type" value="Genomic_DNA"/>
</dbReference>
<dbReference type="RefSeq" id="WP_006011293.1">
    <property type="nucleotide sequence ID" value="NC_007799.1"/>
</dbReference>
<dbReference type="SMR" id="Q2GF82"/>
<dbReference type="STRING" id="205920.ECH_1117"/>
<dbReference type="KEGG" id="ech:ECH_1117"/>
<dbReference type="eggNOG" id="COG0105">
    <property type="taxonomic scope" value="Bacteria"/>
</dbReference>
<dbReference type="HOGENOM" id="CLU_060216_8_1_5"/>
<dbReference type="OrthoDB" id="9801161at2"/>
<dbReference type="Proteomes" id="UP000008320">
    <property type="component" value="Chromosome"/>
</dbReference>
<dbReference type="GO" id="GO:0005737">
    <property type="term" value="C:cytoplasm"/>
    <property type="evidence" value="ECO:0007669"/>
    <property type="project" value="UniProtKB-SubCell"/>
</dbReference>
<dbReference type="GO" id="GO:0005524">
    <property type="term" value="F:ATP binding"/>
    <property type="evidence" value="ECO:0007669"/>
    <property type="project" value="UniProtKB-UniRule"/>
</dbReference>
<dbReference type="GO" id="GO:0046872">
    <property type="term" value="F:metal ion binding"/>
    <property type="evidence" value="ECO:0007669"/>
    <property type="project" value="UniProtKB-KW"/>
</dbReference>
<dbReference type="GO" id="GO:0004550">
    <property type="term" value="F:nucleoside diphosphate kinase activity"/>
    <property type="evidence" value="ECO:0007669"/>
    <property type="project" value="UniProtKB-UniRule"/>
</dbReference>
<dbReference type="GO" id="GO:0006241">
    <property type="term" value="P:CTP biosynthetic process"/>
    <property type="evidence" value="ECO:0007669"/>
    <property type="project" value="UniProtKB-UniRule"/>
</dbReference>
<dbReference type="GO" id="GO:0006183">
    <property type="term" value="P:GTP biosynthetic process"/>
    <property type="evidence" value="ECO:0007669"/>
    <property type="project" value="UniProtKB-UniRule"/>
</dbReference>
<dbReference type="GO" id="GO:0006228">
    <property type="term" value="P:UTP biosynthetic process"/>
    <property type="evidence" value="ECO:0007669"/>
    <property type="project" value="UniProtKB-UniRule"/>
</dbReference>
<dbReference type="CDD" id="cd04413">
    <property type="entry name" value="NDPk_I"/>
    <property type="match status" value="1"/>
</dbReference>
<dbReference type="FunFam" id="3.30.70.141:FF:000017">
    <property type="entry name" value="Nucleoside diphosphate kinase"/>
    <property type="match status" value="1"/>
</dbReference>
<dbReference type="Gene3D" id="3.30.70.141">
    <property type="entry name" value="Nucleoside diphosphate kinase-like domain"/>
    <property type="match status" value="1"/>
</dbReference>
<dbReference type="HAMAP" id="MF_00451">
    <property type="entry name" value="NDP_kinase"/>
    <property type="match status" value="1"/>
</dbReference>
<dbReference type="InterPro" id="IPR034907">
    <property type="entry name" value="NDK-like_dom"/>
</dbReference>
<dbReference type="InterPro" id="IPR036850">
    <property type="entry name" value="NDK-like_dom_sf"/>
</dbReference>
<dbReference type="InterPro" id="IPR001564">
    <property type="entry name" value="Nucleoside_diP_kinase"/>
</dbReference>
<dbReference type="InterPro" id="IPR023005">
    <property type="entry name" value="Nucleoside_diP_kinase_AS"/>
</dbReference>
<dbReference type="NCBIfam" id="NF001908">
    <property type="entry name" value="PRK00668.1"/>
    <property type="match status" value="1"/>
</dbReference>
<dbReference type="PANTHER" id="PTHR46161">
    <property type="entry name" value="NUCLEOSIDE DIPHOSPHATE KINASE"/>
    <property type="match status" value="1"/>
</dbReference>
<dbReference type="PANTHER" id="PTHR46161:SF3">
    <property type="entry name" value="NUCLEOSIDE DIPHOSPHATE KINASE DDB_G0292928-RELATED"/>
    <property type="match status" value="1"/>
</dbReference>
<dbReference type="Pfam" id="PF00334">
    <property type="entry name" value="NDK"/>
    <property type="match status" value="1"/>
</dbReference>
<dbReference type="PRINTS" id="PR01243">
    <property type="entry name" value="NUCDPKINASE"/>
</dbReference>
<dbReference type="SMART" id="SM00562">
    <property type="entry name" value="NDK"/>
    <property type="match status" value="1"/>
</dbReference>
<dbReference type="SUPFAM" id="SSF54919">
    <property type="entry name" value="Nucleoside diphosphate kinase, NDK"/>
    <property type="match status" value="1"/>
</dbReference>
<dbReference type="PROSITE" id="PS00469">
    <property type="entry name" value="NDPK"/>
    <property type="match status" value="1"/>
</dbReference>
<dbReference type="PROSITE" id="PS51374">
    <property type="entry name" value="NDPK_LIKE"/>
    <property type="match status" value="1"/>
</dbReference>
<keyword id="KW-0067">ATP-binding</keyword>
<keyword id="KW-0963">Cytoplasm</keyword>
<keyword id="KW-0418">Kinase</keyword>
<keyword id="KW-0460">Magnesium</keyword>
<keyword id="KW-0479">Metal-binding</keyword>
<keyword id="KW-0546">Nucleotide metabolism</keyword>
<keyword id="KW-0547">Nucleotide-binding</keyword>
<keyword id="KW-0597">Phosphoprotein</keyword>
<keyword id="KW-1185">Reference proteome</keyword>
<keyword id="KW-0808">Transferase</keyword>
<reference key="1">
    <citation type="journal article" date="2006" name="PLoS Genet.">
        <title>Comparative genomics of emerging human ehrlichiosis agents.</title>
        <authorList>
            <person name="Dunning Hotopp J.C."/>
            <person name="Lin M."/>
            <person name="Madupu R."/>
            <person name="Crabtree J."/>
            <person name="Angiuoli S.V."/>
            <person name="Eisen J.A."/>
            <person name="Seshadri R."/>
            <person name="Ren Q."/>
            <person name="Wu M."/>
            <person name="Utterback T.R."/>
            <person name="Smith S."/>
            <person name="Lewis M."/>
            <person name="Khouri H."/>
            <person name="Zhang C."/>
            <person name="Niu H."/>
            <person name="Lin Q."/>
            <person name="Ohashi N."/>
            <person name="Zhi N."/>
            <person name="Nelson W.C."/>
            <person name="Brinkac L.M."/>
            <person name="Dodson R.J."/>
            <person name="Rosovitz M.J."/>
            <person name="Sundaram J.P."/>
            <person name="Daugherty S.C."/>
            <person name="Davidsen T."/>
            <person name="Durkin A.S."/>
            <person name="Gwinn M.L."/>
            <person name="Haft D.H."/>
            <person name="Selengut J.D."/>
            <person name="Sullivan S.A."/>
            <person name="Zafar N."/>
            <person name="Zhou L."/>
            <person name="Benahmed F."/>
            <person name="Forberger H."/>
            <person name="Halpin R."/>
            <person name="Mulligan S."/>
            <person name="Robinson J."/>
            <person name="White O."/>
            <person name="Rikihisa Y."/>
            <person name="Tettelin H."/>
        </authorList>
    </citation>
    <scope>NUCLEOTIDE SEQUENCE [LARGE SCALE GENOMIC DNA]</scope>
    <source>
        <strain>ATCC CRL-10679 / Arkansas</strain>
    </source>
</reference>
<accession>Q2GF82</accession>
<evidence type="ECO:0000255" key="1">
    <source>
        <dbReference type="HAMAP-Rule" id="MF_00451"/>
    </source>
</evidence>
<feature type="chain" id="PRO_0000242497" description="Nucleoside diphosphate kinase">
    <location>
        <begin position="1"/>
        <end position="142"/>
    </location>
</feature>
<feature type="active site" description="Pros-phosphohistidine intermediate" evidence="1">
    <location>
        <position position="116"/>
    </location>
</feature>
<feature type="binding site" evidence="1">
    <location>
        <position position="10"/>
    </location>
    <ligand>
        <name>ATP</name>
        <dbReference type="ChEBI" id="CHEBI:30616"/>
    </ligand>
</feature>
<feature type="binding site" evidence="1">
    <location>
        <position position="58"/>
    </location>
    <ligand>
        <name>ATP</name>
        <dbReference type="ChEBI" id="CHEBI:30616"/>
    </ligand>
</feature>
<feature type="binding site" evidence="1">
    <location>
        <position position="86"/>
    </location>
    <ligand>
        <name>ATP</name>
        <dbReference type="ChEBI" id="CHEBI:30616"/>
    </ligand>
</feature>
<feature type="binding site" evidence="1">
    <location>
        <position position="92"/>
    </location>
    <ligand>
        <name>ATP</name>
        <dbReference type="ChEBI" id="CHEBI:30616"/>
    </ligand>
</feature>
<feature type="binding site" evidence="1">
    <location>
        <position position="103"/>
    </location>
    <ligand>
        <name>ATP</name>
        <dbReference type="ChEBI" id="CHEBI:30616"/>
    </ligand>
</feature>
<feature type="binding site" evidence="1">
    <location>
        <position position="113"/>
    </location>
    <ligand>
        <name>ATP</name>
        <dbReference type="ChEBI" id="CHEBI:30616"/>
    </ligand>
</feature>
<protein>
    <recommendedName>
        <fullName evidence="1">Nucleoside diphosphate kinase</fullName>
        <shortName evidence="1">NDK</shortName>
        <shortName evidence="1">NDP kinase</shortName>
        <ecNumber evidence="1">2.7.4.6</ecNumber>
    </recommendedName>
    <alternativeName>
        <fullName evidence="1">Nucleoside-2-P kinase</fullName>
    </alternativeName>
</protein>
<proteinExistence type="inferred from homology"/>
<name>NDK_EHRCR</name>
<comment type="function">
    <text evidence="1">Major role in the synthesis of nucleoside triphosphates other than ATP. The ATP gamma phosphate is transferred to the NDP beta phosphate via a ping-pong mechanism, using a phosphorylated active-site intermediate.</text>
</comment>
<comment type="catalytic activity">
    <reaction evidence="1">
        <text>a 2'-deoxyribonucleoside 5'-diphosphate + ATP = a 2'-deoxyribonucleoside 5'-triphosphate + ADP</text>
        <dbReference type="Rhea" id="RHEA:44640"/>
        <dbReference type="ChEBI" id="CHEBI:30616"/>
        <dbReference type="ChEBI" id="CHEBI:61560"/>
        <dbReference type="ChEBI" id="CHEBI:73316"/>
        <dbReference type="ChEBI" id="CHEBI:456216"/>
        <dbReference type="EC" id="2.7.4.6"/>
    </reaction>
</comment>
<comment type="catalytic activity">
    <reaction evidence="1">
        <text>a ribonucleoside 5'-diphosphate + ATP = a ribonucleoside 5'-triphosphate + ADP</text>
        <dbReference type="Rhea" id="RHEA:18113"/>
        <dbReference type="ChEBI" id="CHEBI:30616"/>
        <dbReference type="ChEBI" id="CHEBI:57930"/>
        <dbReference type="ChEBI" id="CHEBI:61557"/>
        <dbReference type="ChEBI" id="CHEBI:456216"/>
        <dbReference type="EC" id="2.7.4.6"/>
    </reaction>
</comment>
<comment type="cofactor">
    <cofactor evidence="1">
        <name>Mg(2+)</name>
        <dbReference type="ChEBI" id="CHEBI:18420"/>
    </cofactor>
</comment>
<comment type="subunit">
    <text evidence="1">Homotetramer.</text>
</comment>
<comment type="subcellular location">
    <subcellularLocation>
        <location evidence="1">Cytoplasm</location>
    </subcellularLocation>
</comment>
<comment type="similarity">
    <text evidence="1">Belongs to the NDK family.</text>
</comment>